<feature type="chain" id="PRO_1000202623" description="S-adenosylmethionine synthase">
    <location>
        <begin position="1"/>
        <end position="383"/>
    </location>
</feature>
<feature type="region of interest" description="Flexible loop" evidence="1">
    <location>
        <begin position="99"/>
        <end position="109"/>
    </location>
</feature>
<feature type="binding site" description="in other chain" evidence="1">
    <location>
        <position position="15"/>
    </location>
    <ligand>
        <name>ATP</name>
        <dbReference type="ChEBI" id="CHEBI:30616"/>
        <note>ligand shared between two neighboring subunits</note>
    </ligand>
</feature>
<feature type="binding site" evidence="1">
    <location>
        <position position="17"/>
    </location>
    <ligand>
        <name>Mg(2+)</name>
        <dbReference type="ChEBI" id="CHEBI:18420"/>
    </ligand>
</feature>
<feature type="binding site" evidence="1">
    <location>
        <position position="43"/>
    </location>
    <ligand>
        <name>K(+)</name>
        <dbReference type="ChEBI" id="CHEBI:29103"/>
    </ligand>
</feature>
<feature type="binding site" description="in other chain" evidence="1">
    <location>
        <position position="56"/>
    </location>
    <ligand>
        <name>L-methionine</name>
        <dbReference type="ChEBI" id="CHEBI:57844"/>
        <note>ligand shared between two neighboring subunits</note>
    </ligand>
</feature>
<feature type="binding site" description="in other chain" evidence="1">
    <location>
        <position position="99"/>
    </location>
    <ligand>
        <name>L-methionine</name>
        <dbReference type="ChEBI" id="CHEBI:57844"/>
        <note>ligand shared between two neighboring subunits</note>
    </ligand>
</feature>
<feature type="binding site" description="in other chain" evidence="1">
    <location>
        <begin position="164"/>
        <end position="166"/>
    </location>
    <ligand>
        <name>ATP</name>
        <dbReference type="ChEBI" id="CHEBI:30616"/>
        <note>ligand shared between two neighboring subunits</note>
    </ligand>
</feature>
<feature type="binding site" description="in other chain" evidence="1">
    <location>
        <begin position="230"/>
        <end position="231"/>
    </location>
    <ligand>
        <name>ATP</name>
        <dbReference type="ChEBI" id="CHEBI:30616"/>
        <note>ligand shared between two neighboring subunits</note>
    </ligand>
</feature>
<feature type="binding site" evidence="1">
    <location>
        <position position="239"/>
    </location>
    <ligand>
        <name>ATP</name>
        <dbReference type="ChEBI" id="CHEBI:30616"/>
        <note>ligand shared between two neighboring subunits</note>
    </ligand>
</feature>
<feature type="binding site" evidence="1">
    <location>
        <position position="239"/>
    </location>
    <ligand>
        <name>L-methionine</name>
        <dbReference type="ChEBI" id="CHEBI:57844"/>
        <note>ligand shared between two neighboring subunits</note>
    </ligand>
</feature>
<feature type="binding site" description="in other chain" evidence="1">
    <location>
        <begin position="245"/>
        <end position="246"/>
    </location>
    <ligand>
        <name>ATP</name>
        <dbReference type="ChEBI" id="CHEBI:30616"/>
        <note>ligand shared between two neighboring subunits</note>
    </ligand>
</feature>
<feature type="binding site" evidence="1">
    <location>
        <position position="262"/>
    </location>
    <ligand>
        <name>ATP</name>
        <dbReference type="ChEBI" id="CHEBI:30616"/>
        <note>ligand shared between two neighboring subunits</note>
    </ligand>
</feature>
<feature type="binding site" evidence="1">
    <location>
        <position position="266"/>
    </location>
    <ligand>
        <name>ATP</name>
        <dbReference type="ChEBI" id="CHEBI:30616"/>
        <note>ligand shared between two neighboring subunits</note>
    </ligand>
</feature>
<feature type="binding site" description="in other chain" evidence="1">
    <location>
        <position position="270"/>
    </location>
    <ligand>
        <name>L-methionine</name>
        <dbReference type="ChEBI" id="CHEBI:57844"/>
        <note>ligand shared between two neighboring subunits</note>
    </ligand>
</feature>
<reference key="1">
    <citation type="submission" date="2009-07" db="EMBL/GenBank/DDBJ databases">
        <title>Complete sequence of Pectobacterium carotovorum subsp. carotovorum PC1.</title>
        <authorList>
            <consortium name="US DOE Joint Genome Institute"/>
            <person name="Lucas S."/>
            <person name="Copeland A."/>
            <person name="Lapidus A."/>
            <person name="Glavina del Rio T."/>
            <person name="Tice H."/>
            <person name="Bruce D."/>
            <person name="Goodwin L."/>
            <person name="Pitluck S."/>
            <person name="Munk A.C."/>
            <person name="Brettin T."/>
            <person name="Detter J.C."/>
            <person name="Han C."/>
            <person name="Tapia R."/>
            <person name="Larimer F."/>
            <person name="Land M."/>
            <person name="Hauser L."/>
            <person name="Kyrpides N."/>
            <person name="Mikhailova N."/>
            <person name="Balakrishnan V."/>
            <person name="Glasner J."/>
            <person name="Perna N.T."/>
        </authorList>
    </citation>
    <scope>NUCLEOTIDE SEQUENCE [LARGE SCALE GENOMIC DNA]</scope>
    <source>
        <strain>PC1</strain>
    </source>
</reference>
<name>METK_PECCP</name>
<organism>
    <name type="scientific">Pectobacterium carotovorum subsp. carotovorum (strain PC1)</name>
    <dbReference type="NCBI Taxonomy" id="561230"/>
    <lineage>
        <taxon>Bacteria</taxon>
        <taxon>Pseudomonadati</taxon>
        <taxon>Pseudomonadota</taxon>
        <taxon>Gammaproteobacteria</taxon>
        <taxon>Enterobacterales</taxon>
        <taxon>Pectobacteriaceae</taxon>
        <taxon>Pectobacterium</taxon>
    </lineage>
</organism>
<comment type="function">
    <text evidence="1">Catalyzes the formation of S-adenosylmethionine (AdoMet) from methionine and ATP. The overall synthetic reaction is composed of two sequential steps, AdoMet formation and the subsequent tripolyphosphate hydrolysis which occurs prior to release of AdoMet from the enzyme.</text>
</comment>
<comment type="catalytic activity">
    <reaction evidence="1">
        <text>L-methionine + ATP + H2O = S-adenosyl-L-methionine + phosphate + diphosphate</text>
        <dbReference type="Rhea" id="RHEA:21080"/>
        <dbReference type="ChEBI" id="CHEBI:15377"/>
        <dbReference type="ChEBI" id="CHEBI:30616"/>
        <dbReference type="ChEBI" id="CHEBI:33019"/>
        <dbReference type="ChEBI" id="CHEBI:43474"/>
        <dbReference type="ChEBI" id="CHEBI:57844"/>
        <dbReference type="ChEBI" id="CHEBI:59789"/>
        <dbReference type="EC" id="2.5.1.6"/>
    </reaction>
</comment>
<comment type="cofactor">
    <cofactor evidence="1">
        <name>Mg(2+)</name>
        <dbReference type="ChEBI" id="CHEBI:18420"/>
    </cofactor>
    <text evidence="1">Binds 2 divalent ions per subunit.</text>
</comment>
<comment type="cofactor">
    <cofactor evidence="1">
        <name>K(+)</name>
        <dbReference type="ChEBI" id="CHEBI:29103"/>
    </cofactor>
    <text evidence="1">Binds 1 potassium ion per subunit.</text>
</comment>
<comment type="pathway">
    <text evidence="1">Amino-acid biosynthesis; S-adenosyl-L-methionine biosynthesis; S-adenosyl-L-methionine from L-methionine: step 1/1.</text>
</comment>
<comment type="subunit">
    <text evidence="1">Homotetramer; dimer of dimers.</text>
</comment>
<comment type="subcellular location">
    <subcellularLocation>
        <location evidence="1">Cytoplasm</location>
    </subcellularLocation>
</comment>
<comment type="similarity">
    <text evidence="1">Belongs to the AdoMet synthase family.</text>
</comment>
<proteinExistence type="inferred from homology"/>
<sequence length="383" mass="41799">MAKHLFTSESVSEGHPDKIADQISDAVLDAILEQDPKARVACETYVKTGMVLVGGEITTSAWVDIEEITRRTVRDIGYVNSEMGFDANSCAVLSAIGKQSPDINQGVDRRDPLEQGAGDQGLMFGYATNETDVLMPAPVTYAHRLVQRQSEVRKSGSLPWLRPDAKSQVTFLYDDGKIAGIDAVVLSTQHSEEISQKDLHEAVMEEIIKPVLPAEWLSANTKYFINPTGRFVIGGPMGDCGLTGRKIIVDTYGGAARHGGGAFSGKDPSKVDRSAAYAARYVAKNIVAAGLADRCEIQVSYAIGVAEPTSIMIETFGTEKVSTEQLTLLVREFFDLRPYGLIQMLDLLHPIYQETAAYGHFGREHFPWEKTDKAAQLREAAGL</sequence>
<keyword id="KW-0067">ATP-binding</keyword>
<keyword id="KW-0963">Cytoplasm</keyword>
<keyword id="KW-0460">Magnesium</keyword>
<keyword id="KW-0479">Metal-binding</keyword>
<keyword id="KW-0547">Nucleotide-binding</keyword>
<keyword id="KW-0554">One-carbon metabolism</keyword>
<keyword id="KW-0630">Potassium</keyword>
<keyword id="KW-0808">Transferase</keyword>
<gene>
    <name evidence="1" type="primary">metK</name>
    <name type="ordered locus">PC1_3707</name>
</gene>
<protein>
    <recommendedName>
        <fullName evidence="1">S-adenosylmethionine synthase</fullName>
        <shortName evidence="1">AdoMet synthase</shortName>
        <ecNumber evidence="1">2.5.1.6</ecNumber>
    </recommendedName>
    <alternativeName>
        <fullName evidence="1">MAT</fullName>
    </alternativeName>
    <alternativeName>
        <fullName evidence="1">Methionine adenosyltransferase</fullName>
    </alternativeName>
</protein>
<dbReference type="EC" id="2.5.1.6" evidence="1"/>
<dbReference type="EMBL" id="CP001657">
    <property type="protein sequence ID" value="ACT14722.1"/>
    <property type="molecule type" value="Genomic_DNA"/>
</dbReference>
<dbReference type="RefSeq" id="WP_015841836.1">
    <property type="nucleotide sequence ID" value="NC_012917.1"/>
</dbReference>
<dbReference type="SMR" id="C6DFI3"/>
<dbReference type="STRING" id="561230.PC1_3707"/>
<dbReference type="GeneID" id="67792483"/>
<dbReference type="KEGG" id="pct:PC1_3707"/>
<dbReference type="eggNOG" id="COG0192">
    <property type="taxonomic scope" value="Bacteria"/>
</dbReference>
<dbReference type="HOGENOM" id="CLU_041802_1_1_6"/>
<dbReference type="OrthoDB" id="9801686at2"/>
<dbReference type="UniPathway" id="UPA00315">
    <property type="reaction ID" value="UER00080"/>
</dbReference>
<dbReference type="Proteomes" id="UP000002736">
    <property type="component" value="Chromosome"/>
</dbReference>
<dbReference type="GO" id="GO:0005737">
    <property type="term" value="C:cytoplasm"/>
    <property type="evidence" value="ECO:0007669"/>
    <property type="project" value="UniProtKB-SubCell"/>
</dbReference>
<dbReference type="GO" id="GO:0005524">
    <property type="term" value="F:ATP binding"/>
    <property type="evidence" value="ECO:0007669"/>
    <property type="project" value="UniProtKB-UniRule"/>
</dbReference>
<dbReference type="GO" id="GO:0000287">
    <property type="term" value="F:magnesium ion binding"/>
    <property type="evidence" value="ECO:0007669"/>
    <property type="project" value="UniProtKB-UniRule"/>
</dbReference>
<dbReference type="GO" id="GO:0004478">
    <property type="term" value="F:methionine adenosyltransferase activity"/>
    <property type="evidence" value="ECO:0007669"/>
    <property type="project" value="UniProtKB-UniRule"/>
</dbReference>
<dbReference type="GO" id="GO:0006730">
    <property type="term" value="P:one-carbon metabolic process"/>
    <property type="evidence" value="ECO:0007669"/>
    <property type="project" value="UniProtKB-KW"/>
</dbReference>
<dbReference type="GO" id="GO:0006556">
    <property type="term" value="P:S-adenosylmethionine biosynthetic process"/>
    <property type="evidence" value="ECO:0007669"/>
    <property type="project" value="UniProtKB-UniRule"/>
</dbReference>
<dbReference type="CDD" id="cd18079">
    <property type="entry name" value="S-AdoMet_synt"/>
    <property type="match status" value="1"/>
</dbReference>
<dbReference type="FunFam" id="3.30.300.10:FF:000001">
    <property type="entry name" value="S-adenosylmethionine synthase"/>
    <property type="match status" value="1"/>
</dbReference>
<dbReference type="FunFam" id="3.30.300.10:FF:000003">
    <property type="entry name" value="S-adenosylmethionine synthase"/>
    <property type="match status" value="1"/>
</dbReference>
<dbReference type="Gene3D" id="3.30.300.10">
    <property type="match status" value="3"/>
</dbReference>
<dbReference type="HAMAP" id="MF_00086">
    <property type="entry name" value="S_AdoMet_synth1"/>
    <property type="match status" value="1"/>
</dbReference>
<dbReference type="InterPro" id="IPR022631">
    <property type="entry name" value="ADOMET_SYNTHASE_CS"/>
</dbReference>
<dbReference type="InterPro" id="IPR022630">
    <property type="entry name" value="S-AdoMet_synt_C"/>
</dbReference>
<dbReference type="InterPro" id="IPR022629">
    <property type="entry name" value="S-AdoMet_synt_central"/>
</dbReference>
<dbReference type="InterPro" id="IPR022628">
    <property type="entry name" value="S-AdoMet_synt_N"/>
</dbReference>
<dbReference type="InterPro" id="IPR002133">
    <property type="entry name" value="S-AdoMet_synthetase"/>
</dbReference>
<dbReference type="InterPro" id="IPR022636">
    <property type="entry name" value="S-AdoMet_synthetase_sfam"/>
</dbReference>
<dbReference type="NCBIfam" id="TIGR01034">
    <property type="entry name" value="metK"/>
    <property type="match status" value="1"/>
</dbReference>
<dbReference type="PANTHER" id="PTHR11964">
    <property type="entry name" value="S-ADENOSYLMETHIONINE SYNTHETASE"/>
    <property type="match status" value="1"/>
</dbReference>
<dbReference type="Pfam" id="PF02773">
    <property type="entry name" value="S-AdoMet_synt_C"/>
    <property type="match status" value="1"/>
</dbReference>
<dbReference type="Pfam" id="PF02772">
    <property type="entry name" value="S-AdoMet_synt_M"/>
    <property type="match status" value="1"/>
</dbReference>
<dbReference type="Pfam" id="PF00438">
    <property type="entry name" value="S-AdoMet_synt_N"/>
    <property type="match status" value="1"/>
</dbReference>
<dbReference type="PIRSF" id="PIRSF000497">
    <property type="entry name" value="MAT"/>
    <property type="match status" value="1"/>
</dbReference>
<dbReference type="SUPFAM" id="SSF55973">
    <property type="entry name" value="S-adenosylmethionine synthetase"/>
    <property type="match status" value="3"/>
</dbReference>
<dbReference type="PROSITE" id="PS00376">
    <property type="entry name" value="ADOMET_SYNTHASE_1"/>
    <property type="match status" value="1"/>
</dbReference>
<dbReference type="PROSITE" id="PS00377">
    <property type="entry name" value="ADOMET_SYNTHASE_2"/>
    <property type="match status" value="1"/>
</dbReference>
<accession>C6DFI3</accession>
<evidence type="ECO:0000255" key="1">
    <source>
        <dbReference type="HAMAP-Rule" id="MF_00086"/>
    </source>
</evidence>